<evidence type="ECO:0000255" key="1">
    <source>
        <dbReference type="HAMAP-Rule" id="MF_00019"/>
    </source>
</evidence>
<protein>
    <recommendedName>
        <fullName evidence="1">Phosphate acyltransferase</fullName>
        <ecNumber evidence="1">2.3.1.274</ecNumber>
    </recommendedName>
    <alternativeName>
        <fullName evidence="1">Acyl-ACP phosphotransacylase</fullName>
    </alternativeName>
    <alternativeName>
        <fullName evidence="1">Acyl-[acyl-carrier-protein]--phosphate acyltransferase</fullName>
    </alternativeName>
    <alternativeName>
        <fullName evidence="1">Phosphate-acyl-ACP acyltransferase</fullName>
    </alternativeName>
</protein>
<name>PLSX_METFK</name>
<reference key="1">
    <citation type="submission" date="2006-03" db="EMBL/GenBank/DDBJ databases">
        <title>Complete sequence of Methylobacillus flagellatus KT.</title>
        <authorList>
            <consortium name="US DOE Joint Genome Institute"/>
            <person name="Copeland A."/>
            <person name="Lucas S."/>
            <person name="Lapidus A."/>
            <person name="Barry K."/>
            <person name="Detter J.C."/>
            <person name="Glavina del Rio T."/>
            <person name="Hammon N."/>
            <person name="Israni S."/>
            <person name="Dalin E."/>
            <person name="Tice H."/>
            <person name="Pitluck S."/>
            <person name="Brettin T."/>
            <person name="Bruce D."/>
            <person name="Han C."/>
            <person name="Tapia R."/>
            <person name="Saunders E."/>
            <person name="Gilna P."/>
            <person name="Schmutz J."/>
            <person name="Larimer F."/>
            <person name="Land M."/>
            <person name="Kyrpides N."/>
            <person name="Anderson I."/>
            <person name="Richardson P."/>
        </authorList>
    </citation>
    <scope>NUCLEOTIDE SEQUENCE [LARGE SCALE GENOMIC DNA]</scope>
    <source>
        <strain>ATCC 51484 / DSM 6875 / VKM B-1610 / KT</strain>
    </source>
</reference>
<comment type="function">
    <text evidence="1">Catalyzes the reversible formation of acyl-phosphate (acyl-PO(4)) from acyl-[acyl-carrier-protein] (acyl-ACP). This enzyme utilizes acyl-ACP as fatty acyl donor, but not acyl-CoA.</text>
</comment>
<comment type="catalytic activity">
    <reaction evidence="1">
        <text>a fatty acyl-[ACP] + phosphate = an acyl phosphate + holo-[ACP]</text>
        <dbReference type="Rhea" id="RHEA:42292"/>
        <dbReference type="Rhea" id="RHEA-COMP:9685"/>
        <dbReference type="Rhea" id="RHEA-COMP:14125"/>
        <dbReference type="ChEBI" id="CHEBI:43474"/>
        <dbReference type="ChEBI" id="CHEBI:59918"/>
        <dbReference type="ChEBI" id="CHEBI:64479"/>
        <dbReference type="ChEBI" id="CHEBI:138651"/>
        <dbReference type="EC" id="2.3.1.274"/>
    </reaction>
</comment>
<comment type="pathway">
    <text evidence="1">Lipid metabolism; phospholipid metabolism.</text>
</comment>
<comment type="subunit">
    <text evidence="1">Homodimer. Probably interacts with PlsY.</text>
</comment>
<comment type="subcellular location">
    <subcellularLocation>
        <location evidence="1">Cytoplasm</location>
    </subcellularLocation>
    <text evidence="1">Associated with the membrane possibly through PlsY.</text>
</comment>
<comment type="similarity">
    <text evidence="1">Belongs to the PlsX family.</text>
</comment>
<feature type="chain" id="PRO_1000001787" description="Phosphate acyltransferase">
    <location>
        <begin position="1"/>
        <end position="347"/>
    </location>
</feature>
<dbReference type="EC" id="2.3.1.274" evidence="1"/>
<dbReference type="EMBL" id="CP000284">
    <property type="protein sequence ID" value="ABE49776.1"/>
    <property type="molecule type" value="Genomic_DNA"/>
</dbReference>
<dbReference type="RefSeq" id="WP_011479730.1">
    <property type="nucleotide sequence ID" value="NC_007947.1"/>
</dbReference>
<dbReference type="SMR" id="Q1H161"/>
<dbReference type="STRING" id="265072.Mfla_1508"/>
<dbReference type="KEGG" id="mfa:Mfla_1508"/>
<dbReference type="eggNOG" id="COG0416">
    <property type="taxonomic scope" value="Bacteria"/>
</dbReference>
<dbReference type="HOGENOM" id="CLU_039379_1_1_4"/>
<dbReference type="OrthoDB" id="9806408at2"/>
<dbReference type="UniPathway" id="UPA00085"/>
<dbReference type="Proteomes" id="UP000002440">
    <property type="component" value="Chromosome"/>
</dbReference>
<dbReference type="GO" id="GO:0005737">
    <property type="term" value="C:cytoplasm"/>
    <property type="evidence" value="ECO:0007669"/>
    <property type="project" value="UniProtKB-SubCell"/>
</dbReference>
<dbReference type="GO" id="GO:0043811">
    <property type="term" value="F:phosphate:acyl-[acyl carrier protein] acyltransferase activity"/>
    <property type="evidence" value="ECO:0007669"/>
    <property type="project" value="UniProtKB-UniRule"/>
</dbReference>
<dbReference type="GO" id="GO:0006633">
    <property type="term" value="P:fatty acid biosynthetic process"/>
    <property type="evidence" value="ECO:0007669"/>
    <property type="project" value="UniProtKB-UniRule"/>
</dbReference>
<dbReference type="GO" id="GO:0008654">
    <property type="term" value="P:phospholipid biosynthetic process"/>
    <property type="evidence" value="ECO:0007669"/>
    <property type="project" value="UniProtKB-KW"/>
</dbReference>
<dbReference type="Gene3D" id="3.40.718.10">
    <property type="entry name" value="Isopropylmalate Dehydrogenase"/>
    <property type="match status" value="1"/>
</dbReference>
<dbReference type="HAMAP" id="MF_00019">
    <property type="entry name" value="PlsX"/>
    <property type="match status" value="1"/>
</dbReference>
<dbReference type="InterPro" id="IPR003664">
    <property type="entry name" value="FA_synthesis"/>
</dbReference>
<dbReference type="InterPro" id="IPR012281">
    <property type="entry name" value="Phospholipid_synth_PlsX-like"/>
</dbReference>
<dbReference type="NCBIfam" id="TIGR00182">
    <property type="entry name" value="plsX"/>
    <property type="match status" value="1"/>
</dbReference>
<dbReference type="PANTHER" id="PTHR30100">
    <property type="entry name" value="FATTY ACID/PHOSPHOLIPID SYNTHESIS PROTEIN PLSX"/>
    <property type="match status" value="1"/>
</dbReference>
<dbReference type="PANTHER" id="PTHR30100:SF1">
    <property type="entry name" value="PHOSPHATE ACYLTRANSFERASE"/>
    <property type="match status" value="1"/>
</dbReference>
<dbReference type="Pfam" id="PF02504">
    <property type="entry name" value="FA_synthesis"/>
    <property type="match status" value="1"/>
</dbReference>
<dbReference type="PIRSF" id="PIRSF002465">
    <property type="entry name" value="Phsphlp_syn_PlsX"/>
    <property type="match status" value="1"/>
</dbReference>
<dbReference type="SUPFAM" id="SSF53659">
    <property type="entry name" value="Isocitrate/Isopropylmalate dehydrogenase-like"/>
    <property type="match status" value="1"/>
</dbReference>
<accession>Q1H161</accession>
<keyword id="KW-0963">Cytoplasm</keyword>
<keyword id="KW-0444">Lipid biosynthesis</keyword>
<keyword id="KW-0443">Lipid metabolism</keyword>
<keyword id="KW-0594">Phospholipid biosynthesis</keyword>
<keyword id="KW-1208">Phospholipid metabolism</keyword>
<keyword id="KW-1185">Reference proteome</keyword>
<keyword id="KW-0808">Transferase</keyword>
<proteinExistence type="inferred from homology"/>
<organism>
    <name type="scientific">Methylobacillus flagellatus (strain ATCC 51484 / DSM 6875 / VKM B-1610 / KT)</name>
    <dbReference type="NCBI Taxonomy" id="265072"/>
    <lineage>
        <taxon>Bacteria</taxon>
        <taxon>Pseudomonadati</taxon>
        <taxon>Pseudomonadota</taxon>
        <taxon>Betaproteobacteria</taxon>
        <taxon>Nitrosomonadales</taxon>
        <taxon>Methylophilaceae</taxon>
        <taxon>Methylobacillus</taxon>
    </lineage>
</organism>
<sequence length="347" mass="37316">MDITVAIDAMGGDHGPHVTIPAALNAIRQDSQLNIILVGVKDVIEAELSANKATVGPRLRIHHATEVVAMDESPQSALKNKKDSSMRVAINLVKSGEATACVSAGNTGALMATARFVLKTLPGIDRPAIAGILPTQKGRVYMLDLGANADCTPEHLLQFAIMGAMLVSCVEHKERPSVGLLNIGSEDIKGNEVVKQAGELLRASRLNFYGNIEGNDIYKGTTDVVVCDGFVGNVALKTSEGLAQMVNRFLVQEFKRSWMTKLMALISMPVLKAFKRRLDPRRYNGATFLGLRGVVVKSHGGADSLAFQYAIQAAAEESRNGVLNRITEQLEIEHLKPQPAAQGVENI</sequence>
<gene>
    <name evidence="1" type="primary">plsX</name>
    <name type="ordered locus">Mfla_1508</name>
</gene>